<sequence>MEKGEVASLRCRLLLLLLLLTLPPTHQGRTLRHIDPIQSAQDSPAKYLSNGPGQEPVTVLTIDLTKISKPSSSFEFRTWDPEGVIFYGDTNTEDDWFMLGLRDGQLEIQLHNLWARLTVGFGPRLNDGRWHPVELKMNGDSLLLWVDGKEMLCLRQVSASLADHPQLSMRIALGGLLLPTSKLRFPLVPALDGCIRRDIWLGHQAQLSTSARTSLGNCDVDLQPGLFFPPGTHAEFSLQDIPQPHTDPWTFSLELGFKLVDGAGRLLTLGTGTNSSWLTLHLQDQTVVLSSEAEPKLALPLAVGLPLQLKLDVFKVALSQGPKMEVLSTSLLRLASLWRLWSHPQGHLSLGALPGEDSSASFCLSDLWVQGQRLDIDKALSRSQDIWTHSCPQSPSNDTHTSH</sequence>
<evidence type="ECO:0000250" key="1"/>
<evidence type="ECO:0000255" key="2"/>
<evidence type="ECO:0000255" key="3">
    <source>
        <dbReference type="PROSITE-ProRule" id="PRU00122"/>
    </source>
</evidence>
<evidence type="ECO:0000305" key="4"/>
<proteinExistence type="evidence at protein level"/>
<gene>
    <name type="primary">Shbg</name>
</gene>
<reference key="1">
    <citation type="journal article" date="1987" name="Proc. Natl. Acad. Sci. U.S.A.">
        <title>Rat androgen-binding protein: evidence for identical subunits and amino acid sequence homology with human sex hormone-binding globulin.</title>
        <authorList>
            <person name="Joseph D.R."/>
            <person name="Hall S.H."/>
            <person name="French F.S."/>
        </authorList>
    </citation>
    <scope>NUCLEOTIDE SEQUENCE [MRNA] (ISOFORM 1)</scope>
    <source>
        <tissue>Testis</tissue>
    </source>
</reference>
<reference key="2">
    <citation type="journal article" date="1988" name="Mol. Endocrinol.">
        <title>The gene structure of rat androgen-binding protein: identification of potential regulatory deoxyribonucleic acid elements of a follicle-stimulating hormone-regulated protein.</title>
        <authorList>
            <person name="Joseph D.R."/>
            <person name="Hall S.H."/>
            <person name="Conti M."/>
            <person name="French F.S."/>
        </authorList>
    </citation>
    <scope>NUCLEOTIDE SEQUENCE [GENOMIC DNA] (ISOFORM 1)</scope>
</reference>
<reference key="3">
    <citation type="journal article" date="2004" name="Genome Res.">
        <title>The status, quality, and expansion of the NIH full-length cDNA project: the Mammalian Gene Collection (MGC).</title>
        <authorList>
            <consortium name="The MGC Project Team"/>
        </authorList>
    </citation>
    <scope>NUCLEOTIDE SEQUENCE [LARGE SCALE MRNA] (ISOFORM 1)</scope>
    <source>
        <tissue>Testis</tissue>
    </source>
</reference>
<reference key="4">
    <citation type="journal article" date="1991" name="J. Biol. Chem.">
        <title>Alternative processing of androgen-binding protein RNA transcripts in fetal rat liver. Identification of a transcript formed by trans splicing.</title>
        <authorList>
            <person name="Sullivan P.M."/>
            <person name="Petrusz P."/>
            <person name="Szpirer C."/>
            <person name="Joseph D.R."/>
        </authorList>
    </citation>
    <scope>NUCLEOTIDE SEQUENCE [MRNA] OF 1-239</scope>
    <scope>ALTERNATIVE SPLICING</scope>
    <source>
        <strain>Sprague-Dawley</strain>
        <tissue>Fetal liver</tissue>
    </source>
</reference>
<reference key="5">
    <citation type="journal article" date="1988" name="Mol. Endocrinol.">
        <title>Hormonal regulation of rat androgen-binding protein (ABP) messenger ribonucleic acid and homology of human testosterone-estradiol-binding globulin and ABP complementary deoxyribonucleic acids.</title>
        <authorList>
            <person name="Reventos J."/>
            <person name="Hammond G.L."/>
            <person name="Crozat A."/>
            <person name="Brooks D.E."/>
            <person name="Gunsalus G.L."/>
            <person name="Bardin C.W."/>
            <person name="Musto N.A."/>
        </authorList>
    </citation>
    <scope>NUCLEOTIDE SEQUENCE [MRNA] OF 6-403 (ISOFORM 1)</scope>
    <source>
        <tissue>Testis</tissue>
    </source>
</reference>
<reference key="6">
    <citation type="journal article" date="1991" name="Endocrinology">
        <title>Analysis of the steroid binding domain of rat androgen-binding protein.</title>
        <authorList>
            <person name="Danzo B.J."/>
            <person name="Parrott J.A."/>
            <person name="Skinner M.K."/>
        </authorList>
    </citation>
    <scope>PROTEIN SEQUENCE OF 171-181</scope>
</reference>
<dbReference type="EMBL" id="M15034">
    <property type="protein sequence ID" value="AAA40648.1"/>
    <property type="molecule type" value="mRNA"/>
</dbReference>
<dbReference type="EMBL" id="M19993">
    <property type="protein sequence ID" value="AAA40650.1"/>
    <property type="molecule type" value="Genomic_DNA"/>
</dbReference>
<dbReference type="EMBL" id="BC097336">
    <property type="protein sequence ID" value="AAH97336.1"/>
    <property type="molecule type" value="mRNA"/>
</dbReference>
<dbReference type="EMBL" id="M38759">
    <property type="protein sequence ID" value="AAA63476.1"/>
    <property type="status" value="ALT_TERM"/>
    <property type="molecule type" value="mRNA"/>
</dbReference>
<dbReference type="EMBL" id="M31179">
    <property type="protein sequence ID" value="AAA40649.1"/>
    <property type="molecule type" value="mRNA"/>
</dbReference>
<dbReference type="PIR" id="A40935">
    <property type="entry name" value="A26371"/>
</dbReference>
<dbReference type="RefSeq" id="NP_036782.1">
    <molecule id="P08689-1"/>
    <property type="nucleotide sequence ID" value="NM_012650.3"/>
</dbReference>
<dbReference type="SMR" id="P08689"/>
<dbReference type="FunCoup" id="P08689">
    <property type="interactions" value="37"/>
</dbReference>
<dbReference type="STRING" id="10116.ENSRNOP00000015248"/>
<dbReference type="BindingDB" id="P08689"/>
<dbReference type="ChEMBL" id="CHEMBL4932"/>
<dbReference type="GlyCosmos" id="P08689">
    <property type="glycosylation" value="2 sites, No reported glycans"/>
</dbReference>
<dbReference type="GlyGen" id="P08689">
    <property type="glycosylation" value="2 sites"/>
</dbReference>
<dbReference type="PhosphoSitePlus" id="P08689"/>
<dbReference type="PaxDb" id="10116-ENSRNOP00000015248"/>
<dbReference type="GeneID" id="24775"/>
<dbReference type="KEGG" id="rno:24775"/>
<dbReference type="UCSC" id="RGD:3671">
    <molecule id="P08689-1"/>
    <property type="organism name" value="rat"/>
</dbReference>
<dbReference type="AGR" id="RGD:3671"/>
<dbReference type="CTD" id="6462"/>
<dbReference type="RGD" id="3671">
    <property type="gene designation" value="Shbg"/>
</dbReference>
<dbReference type="eggNOG" id="KOG3927">
    <property type="taxonomic scope" value="Eukaryota"/>
</dbReference>
<dbReference type="HOGENOM" id="CLU_063172_0_0_1"/>
<dbReference type="InParanoid" id="P08689"/>
<dbReference type="OrthoDB" id="6275838at2759"/>
<dbReference type="PhylomeDB" id="P08689"/>
<dbReference type="TreeFam" id="TF334367"/>
<dbReference type="PRO" id="PR:P08689"/>
<dbReference type="Proteomes" id="UP000002494">
    <property type="component" value="Unplaced"/>
</dbReference>
<dbReference type="GO" id="GO:0005615">
    <property type="term" value="C:extracellular space"/>
    <property type="evidence" value="ECO:0000304"/>
    <property type="project" value="RGD"/>
</dbReference>
<dbReference type="GO" id="GO:0005496">
    <property type="term" value="F:steroid binding"/>
    <property type="evidence" value="ECO:0000318"/>
    <property type="project" value="GO_Central"/>
</dbReference>
<dbReference type="GO" id="GO:0007285">
    <property type="term" value="P:primary spermatocyte growth"/>
    <property type="evidence" value="ECO:0000315"/>
    <property type="project" value="RGD"/>
</dbReference>
<dbReference type="CDD" id="cd00110">
    <property type="entry name" value="LamG"/>
    <property type="match status" value="1"/>
</dbReference>
<dbReference type="FunFam" id="2.60.120.200:FF:000107">
    <property type="entry name" value="Sex hormone-binding globulin"/>
    <property type="match status" value="1"/>
</dbReference>
<dbReference type="FunFam" id="2.60.120.200:FF:000355">
    <property type="entry name" value="Sex hormone-binding globulin"/>
    <property type="match status" value="1"/>
</dbReference>
<dbReference type="Gene3D" id="2.60.120.200">
    <property type="match status" value="2"/>
</dbReference>
<dbReference type="InterPro" id="IPR013320">
    <property type="entry name" value="ConA-like_dom_sf"/>
</dbReference>
<dbReference type="InterPro" id="IPR051145">
    <property type="entry name" value="GAS-SHBG-PROS"/>
</dbReference>
<dbReference type="InterPro" id="IPR001791">
    <property type="entry name" value="Laminin_G"/>
</dbReference>
<dbReference type="PANTHER" id="PTHR24040">
    <property type="entry name" value="LAMININ G-LIKE DOMAIN-CONTAINING PROTEIN"/>
    <property type="match status" value="1"/>
</dbReference>
<dbReference type="PANTHER" id="PTHR24040:SF3">
    <property type="entry name" value="SEX HORMONE-BINDING GLOBULIN"/>
    <property type="match status" value="1"/>
</dbReference>
<dbReference type="Pfam" id="PF00054">
    <property type="entry name" value="Laminin_G_1"/>
    <property type="match status" value="1"/>
</dbReference>
<dbReference type="SMART" id="SM00282">
    <property type="entry name" value="LamG"/>
    <property type="match status" value="1"/>
</dbReference>
<dbReference type="SUPFAM" id="SSF49899">
    <property type="entry name" value="Concanavalin A-like lectins/glucanases"/>
    <property type="match status" value="2"/>
</dbReference>
<dbReference type="PROSITE" id="PS50025">
    <property type="entry name" value="LAM_G_DOMAIN"/>
    <property type="match status" value="1"/>
</dbReference>
<accession>P08689</accession>
<accession>Q4QR94</accession>
<accession>Q63029</accession>
<comment type="function">
    <text evidence="1">Functions as an androgen transport protein, but may also be involved in receptor mediated processes. Each dimer binds one molecule of steroid. Specific for 5-alpha-dihydrotestosterone, testosterone, and 17-beta-estradiol. Regulates the plasma metabolic clearance rate of steroid hormones by controlling their plasma concentration (By similarity).</text>
</comment>
<comment type="subunit">
    <text>Homodimer.</text>
</comment>
<comment type="subcellular location">
    <subcellularLocation>
        <location>Secreted</location>
    </subcellularLocation>
    <text>In testis, it is synthesized by the Sertoli cells, secreted into the lumen of the seminiferous tubule and transported to the epididymis.</text>
</comment>
<comment type="alternative products">
    <event type="alternative splicing"/>
    <isoform>
        <id>P08689-1</id>
        <name>1</name>
        <sequence type="displayed"/>
    </isoform>
    <isoform>
        <id>P08689-2</id>
        <name>2</name>
        <sequence type="described" ref="VSP_006093 VSP_006094"/>
    </isoform>
    <text>Additional isoforms seem to exist.</text>
</comment>
<comment type="tissue specificity">
    <text>Isoform 2 is only expressed in the liver.</text>
</comment>
<comment type="developmental stage">
    <text>In the fetal liver, expressed from day 14 to day 17 after conception.</text>
</comment>
<comment type="miscellaneous">
    <text>A putative trans-splicing which involves HDC and SHBG gene regions produces a fusion protein expressed in fetal liver.</text>
</comment>
<comment type="miscellaneous">
    <molecule>Isoform 2</molecule>
    <text evidence="4">Incomplete sequence.</text>
</comment>
<keyword id="KW-0025">Alternative splicing</keyword>
<keyword id="KW-0903">Direct protein sequencing</keyword>
<keyword id="KW-1015">Disulfide bond</keyword>
<keyword id="KW-0325">Glycoprotein</keyword>
<keyword id="KW-0446">Lipid-binding</keyword>
<keyword id="KW-1185">Reference proteome</keyword>
<keyword id="KW-0677">Repeat</keyword>
<keyword id="KW-0964">Secreted</keyword>
<keyword id="KW-0732">Signal</keyword>
<keyword id="KW-0754">Steroid-binding</keyword>
<organism>
    <name type="scientific">Rattus norvegicus</name>
    <name type="common">Rat</name>
    <dbReference type="NCBI Taxonomy" id="10116"/>
    <lineage>
        <taxon>Eukaryota</taxon>
        <taxon>Metazoa</taxon>
        <taxon>Chordata</taxon>
        <taxon>Craniata</taxon>
        <taxon>Vertebrata</taxon>
        <taxon>Euteleostomi</taxon>
        <taxon>Mammalia</taxon>
        <taxon>Eutheria</taxon>
        <taxon>Euarchontoglires</taxon>
        <taxon>Glires</taxon>
        <taxon>Rodentia</taxon>
        <taxon>Myomorpha</taxon>
        <taxon>Muroidea</taxon>
        <taxon>Muridae</taxon>
        <taxon>Murinae</taxon>
        <taxon>Rattus</taxon>
    </lineage>
</organism>
<name>SHBG_RAT</name>
<feature type="signal peptide" evidence="2">
    <location>
        <begin position="1"/>
        <end position="30"/>
    </location>
</feature>
<feature type="chain" id="PRO_0000032561" description="Sex hormone-binding globulin">
    <location>
        <begin position="31"/>
        <end position="403"/>
    </location>
</feature>
<feature type="domain" description="Laminin G-like 1" evidence="3">
    <location>
        <begin position="46"/>
        <end position="218"/>
    </location>
</feature>
<feature type="domain" description="Laminin G-like 2" evidence="3">
    <location>
        <begin position="225"/>
        <end position="391"/>
    </location>
</feature>
<feature type="glycosylation site" description="N-linked (GlcNAc...) asparagine" evidence="2">
    <location>
        <position position="274"/>
    </location>
</feature>
<feature type="glycosylation site" description="N-linked (GlcNAc...) asparagine" evidence="2">
    <location>
        <position position="397"/>
    </location>
</feature>
<feature type="disulfide bond" evidence="3">
    <location>
        <begin position="194"/>
        <end position="218"/>
    </location>
</feature>
<feature type="disulfide bond" evidence="3">
    <location>
        <begin position="363"/>
        <end position="391"/>
    </location>
</feature>
<feature type="splice variant" id="VSP_006093" description="In isoform 2." evidence="4">
    <original>MEKGEVASLRCRLLLLLLLLTLPPTHQGRTLRHIDPIQ</original>
    <variation>QSREERGRARSVGLDFRLHK</variation>
    <location>
        <begin position="1"/>
        <end position="38"/>
    </location>
</feature>
<feature type="splice variant" id="VSP_006094" description="In isoform 2." evidence="4">
    <location>
        <begin position="241"/>
        <end position="245"/>
    </location>
</feature>
<feature type="sequence conflict" description="In Ref. 5; AAA40649." evidence="4" ref="5">
    <original>H</original>
    <variation>R</variation>
    <location>
        <position position="347"/>
    </location>
</feature>
<protein>
    <recommendedName>
        <fullName>Sex hormone-binding globulin</fullName>
        <shortName>SHBG</shortName>
    </recommendedName>
    <alternativeName>
        <fullName>Sex steroid-binding protein</fullName>
        <shortName>SBP</shortName>
    </alternativeName>
    <alternativeName>
        <fullName>Testis-specific androgen-binding protein</fullName>
        <shortName>ABP</shortName>
    </alternativeName>
</protein>